<comment type="function">
    <text evidence="1">Binds the lower part of the 30S subunit head. Binds mRNA in the 70S ribosome, positioning it for translation.</text>
</comment>
<comment type="subunit">
    <text evidence="1">Part of the 30S ribosomal subunit. Forms a tight complex with proteins S10 and S14.</text>
</comment>
<comment type="similarity">
    <text evidence="1">Belongs to the universal ribosomal protein uS3 family.</text>
</comment>
<keyword id="KW-0687">Ribonucleoprotein</keyword>
<keyword id="KW-0689">Ribosomal protein</keyword>
<keyword id="KW-0694">RNA-binding</keyword>
<keyword id="KW-0699">rRNA-binding</keyword>
<dbReference type="EMBL" id="CP000814">
    <property type="protein sequence ID" value="ABV53202.1"/>
    <property type="molecule type" value="Genomic_DNA"/>
</dbReference>
<dbReference type="RefSeq" id="WP_002851138.1">
    <property type="nucleotide sequence ID" value="NC_009839.1"/>
</dbReference>
<dbReference type="SMR" id="A8FP15"/>
<dbReference type="KEGG" id="cju:C8J_1605"/>
<dbReference type="HOGENOM" id="CLU_058591_0_2_7"/>
<dbReference type="GO" id="GO:0022627">
    <property type="term" value="C:cytosolic small ribosomal subunit"/>
    <property type="evidence" value="ECO:0007669"/>
    <property type="project" value="TreeGrafter"/>
</dbReference>
<dbReference type="GO" id="GO:0003729">
    <property type="term" value="F:mRNA binding"/>
    <property type="evidence" value="ECO:0007669"/>
    <property type="project" value="UniProtKB-UniRule"/>
</dbReference>
<dbReference type="GO" id="GO:0019843">
    <property type="term" value="F:rRNA binding"/>
    <property type="evidence" value="ECO:0007669"/>
    <property type="project" value="UniProtKB-UniRule"/>
</dbReference>
<dbReference type="GO" id="GO:0003735">
    <property type="term" value="F:structural constituent of ribosome"/>
    <property type="evidence" value="ECO:0007669"/>
    <property type="project" value="InterPro"/>
</dbReference>
<dbReference type="GO" id="GO:0006412">
    <property type="term" value="P:translation"/>
    <property type="evidence" value="ECO:0007669"/>
    <property type="project" value="UniProtKB-UniRule"/>
</dbReference>
<dbReference type="CDD" id="cd02412">
    <property type="entry name" value="KH-II_30S_S3"/>
    <property type="match status" value="1"/>
</dbReference>
<dbReference type="FunFam" id="3.30.1140.32:FF:000006">
    <property type="entry name" value="30S ribosomal protein S3"/>
    <property type="match status" value="1"/>
</dbReference>
<dbReference type="FunFam" id="3.30.300.20:FF:000001">
    <property type="entry name" value="30S ribosomal protein S3"/>
    <property type="match status" value="1"/>
</dbReference>
<dbReference type="Gene3D" id="3.30.300.20">
    <property type="match status" value="1"/>
</dbReference>
<dbReference type="Gene3D" id="3.30.1140.32">
    <property type="entry name" value="Ribosomal protein S3, C-terminal domain"/>
    <property type="match status" value="1"/>
</dbReference>
<dbReference type="HAMAP" id="MF_01309_B">
    <property type="entry name" value="Ribosomal_uS3_B"/>
    <property type="match status" value="1"/>
</dbReference>
<dbReference type="InterPro" id="IPR004087">
    <property type="entry name" value="KH_dom"/>
</dbReference>
<dbReference type="InterPro" id="IPR015946">
    <property type="entry name" value="KH_dom-like_a/b"/>
</dbReference>
<dbReference type="InterPro" id="IPR004044">
    <property type="entry name" value="KH_dom_type_2"/>
</dbReference>
<dbReference type="InterPro" id="IPR009019">
    <property type="entry name" value="KH_sf_prok-type"/>
</dbReference>
<dbReference type="InterPro" id="IPR036419">
    <property type="entry name" value="Ribosomal_S3_C_sf"/>
</dbReference>
<dbReference type="InterPro" id="IPR005704">
    <property type="entry name" value="Ribosomal_uS3_bac-typ"/>
</dbReference>
<dbReference type="InterPro" id="IPR001351">
    <property type="entry name" value="Ribosomal_uS3_C"/>
</dbReference>
<dbReference type="InterPro" id="IPR018280">
    <property type="entry name" value="Ribosomal_uS3_CS"/>
</dbReference>
<dbReference type="NCBIfam" id="TIGR01009">
    <property type="entry name" value="rpsC_bact"/>
    <property type="match status" value="1"/>
</dbReference>
<dbReference type="PANTHER" id="PTHR11760">
    <property type="entry name" value="30S/40S RIBOSOMAL PROTEIN S3"/>
    <property type="match status" value="1"/>
</dbReference>
<dbReference type="PANTHER" id="PTHR11760:SF19">
    <property type="entry name" value="SMALL RIBOSOMAL SUBUNIT PROTEIN US3C"/>
    <property type="match status" value="1"/>
</dbReference>
<dbReference type="Pfam" id="PF07650">
    <property type="entry name" value="KH_2"/>
    <property type="match status" value="1"/>
</dbReference>
<dbReference type="Pfam" id="PF00189">
    <property type="entry name" value="Ribosomal_S3_C"/>
    <property type="match status" value="1"/>
</dbReference>
<dbReference type="SMART" id="SM00322">
    <property type="entry name" value="KH"/>
    <property type="match status" value="1"/>
</dbReference>
<dbReference type="SUPFAM" id="SSF54814">
    <property type="entry name" value="Prokaryotic type KH domain (KH-domain type II)"/>
    <property type="match status" value="1"/>
</dbReference>
<dbReference type="SUPFAM" id="SSF54821">
    <property type="entry name" value="Ribosomal protein S3 C-terminal domain"/>
    <property type="match status" value="1"/>
</dbReference>
<dbReference type="PROSITE" id="PS50823">
    <property type="entry name" value="KH_TYPE_2"/>
    <property type="match status" value="1"/>
</dbReference>
<dbReference type="PROSITE" id="PS00548">
    <property type="entry name" value="RIBOSOMAL_S3"/>
    <property type="match status" value="1"/>
</dbReference>
<evidence type="ECO:0000255" key="1">
    <source>
        <dbReference type="HAMAP-Rule" id="MF_01309"/>
    </source>
</evidence>
<evidence type="ECO:0000256" key="2">
    <source>
        <dbReference type="SAM" id="MobiDB-lite"/>
    </source>
</evidence>
<evidence type="ECO:0000305" key="3"/>
<reference key="1">
    <citation type="journal article" date="2007" name="J. Bacteriol.">
        <title>The complete genome sequence of Campylobacter jejuni strain 81116 (NCTC11828).</title>
        <authorList>
            <person name="Pearson B.M."/>
            <person name="Gaskin D.J.H."/>
            <person name="Segers R.P.A.M."/>
            <person name="Wells J.M."/>
            <person name="Nuijten P.J.M."/>
            <person name="van Vliet A.H.M."/>
        </authorList>
    </citation>
    <scope>NUCLEOTIDE SEQUENCE [LARGE SCALE GENOMIC DNA]</scope>
    <source>
        <strain>81116 / NCTC 11828</strain>
    </source>
</reference>
<organism>
    <name type="scientific">Campylobacter jejuni subsp. jejuni serotype O:6 (strain 81116 / NCTC 11828)</name>
    <dbReference type="NCBI Taxonomy" id="407148"/>
    <lineage>
        <taxon>Bacteria</taxon>
        <taxon>Pseudomonadati</taxon>
        <taxon>Campylobacterota</taxon>
        <taxon>Epsilonproteobacteria</taxon>
        <taxon>Campylobacterales</taxon>
        <taxon>Campylobacteraceae</taxon>
        <taxon>Campylobacter</taxon>
    </lineage>
</organism>
<feature type="chain" id="PRO_0000323293" description="Small ribosomal subunit protein uS3">
    <location>
        <begin position="1"/>
        <end position="233"/>
    </location>
</feature>
<feature type="domain" description="KH type-2" evidence="1">
    <location>
        <begin position="39"/>
        <end position="107"/>
    </location>
</feature>
<feature type="region of interest" description="Disordered" evidence="2">
    <location>
        <begin position="212"/>
        <end position="233"/>
    </location>
</feature>
<feature type="compositionally biased region" description="Basic and acidic residues" evidence="2">
    <location>
        <begin position="212"/>
        <end position="222"/>
    </location>
</feature>
<feature type="compositionally biased region" description="Basic residues" evidence="2">
    <location>
        <begin position="224"/>
        <end position="233"/>
    </location>
</feature>
<proteinExistence type="inferred from homology"/>
<sequence>MGQKVNPIGLRLGINRNWESRWFPTKANLVENIGEDYKIRAFLKRKLYYAGISQILVERTAKKLRVTVVAARPGIIIGKKGSDVDNLRKELQDLIGKDVNINIKEERKAGASAQLAAESVATQLEKRIAFRRAMKKVIQGAQKAGAKGIKVSVSGRLGGAEMARTEWYLEGRVPLHTLRAKIDYGFAEARTTYGNIGVKVWIFKGEVLHKGMQPEKTEESAPAKKPRRTRRGK</sequence>
<accession>A8FP15</accession>
<gene>
    <name evidence="1" type="primary">rpsC</name>
    <name type="ordered locus">C8J_1605</name>
</gene>
<protein>
    <recommendedName>
        <fullName evidence="1">Small ribosomal subunit protein uS3</fullName>
    </recommendedName>
    <alternativeName>
        <fullName evidence="3">30S ribosomal protein S3</fullName>
    </alternativeName>
</protein>
<name>RS3_CAMJ8</name>